<evidence type="ECO:0000305" key="1"/>
<comment type="similarity">
    <text evidence="1">Belongs to the UPF0312 family.</text>
</comment>
<accession>Q6G5Y8</accession>
<name>Y2572_STAAS</name>
<proteinExistence type="inferred from homology"/>
<sequence length="171" mass="18627">MTNFTFDGAHSSLEFQIKHLMVSKVKGSFDQFDVAVEGDINDFSTLKATATIIPSSINTKNEARDNHLKSGDFFGTDEFDKITFVTKSVSESKVVGDLTIKGITNEETFDVEFNGVSKNPMDGSQVTGVIVTGTINRENYGINFNQALETGGVMLGKDVKFEASAEFSISE</sequence>
<dbReference type="EMBL" id="BX571857">
    <property type="protein sequence ID" value="CAG44389.1"/>
    <property type="molecule type" value="Genomic_DNA"/>
</dbReference>
<dbReference type="RefSeq" id="WP_000181131.1">
    <property type="nucleotide sequence ID" value="NC_002953.3"/>
</dbReference>
<dbReference type="SMR" id="Q6G5Y8"/>
<dbReference type="KEGG" id="sas:SAS2572"/>
<dbReference type="HOGENOM" id="CLU_071003_3_0_9"/>
<dbReference type="Gene3D" id="2.40.128.110">
    <property type="entry name" value="Lipid/polyisoprenoid-binding, YceI-like"/>
    <property type="match status" value="1"/>
</dbReference>
<dbReference type="InterPro" id="IPR007372">
    <property type="entry name" value="Lipid/polyisoprenoid-bd_YceI"/>
</dbReference>
<dbReference type="InterPro" id="IPR036761">
    <property type="entry name" value="TTHA0802/YceI-like_sf"/>
</dbReference>
<dbReference type="PANTHER" id="PTHR34406">
    <property type="entry name" value="PROTEIN YCEI"/>
    <property type="match status" value="1"/>
</dbReference>
<dbReference type="PANTHER" id="PTHR34406:SF1">
    <property type="entry name" value="PROTEIN YCEI"/>
    <property type="match status" value="1"/>
</dbReference>
<dbReference type="Pfam" id="PF04264">
    <property type="entry name" value="YceI"/>
    <property type="match status" value="1"/>
</dbReference>
<dbReference type="SMART" id="SM00867">
    <property type="entry name" value="YceI"/>
    <property type="match status" value="1"/>
</dbReference>
<dbReference type="SUPFAM" id="SSF101874">
    <property type="entry name" value="YceI-like"/>
    <property type="match status" value="1"/>
</dbReference>
<feature type="chain" id="PRO_0000299510" description="UPF0312 protein SAS2572">
    <location>
        <begin position="1"/>
        <end position="171"/>
    </location>
</feature>
<reference key="1">
    <citation type="journal article" date="2004" name="Proc. Natl. Acad. Sci. U.S.A.">
        <title>Complete genomes of two clinical Staphylococcus aureus strains: evidence for the rapid evolution of virulence and drug resistance.</title>
        <authorList>
            <person name="Holden M.T.G."/>
            <person name="Feil E.J."/>
            <person name="Lindsay J.A."/>
            <person name="Peacock S.J."/>
            <person name="Day N.P.J."/>
            <person name="Enright M.C."/>
            <person name="Foster T.J."/>
            <person name="Moore C.E."/>
            <person name="Hurst L."/>
            <person name="Atkin R."/>
            <person name="Barron A."/>
            <person name="Bason N."/>
            <person name="Bentley S.D."/>
            <person name="Chillingworth C."/>
            <person name="Chillingworth T."/>
            <person name="Churcher C."/>
            <person name="Clark L."/>
            <person name="Corton C."/>
            <person name="Cronin A."/>
            <person name="Doggett J."/>
            <person name="Dowd L."/>
            <person name="Feltwell T."/>
            <person name="Hance Z."/>
            <person name="Harris B."/>
            <person name="Hauser H."/>
            <person name="Holroyd S."/>
            <person name="Jagels K."/>
            <person name="James K.D."/>
            <person name="Lennard N."/>
            <person name="Line A."/>
            <person name="Mayes R."/>
            <person name="Moule S."/>
            <person name="Mungall K."/>
            <person name="Ormond D."/>
            <person name="Quail M.A."/>
            <person name="Rabbinowitsch E."/>
            <person name="Rutherford K.M."/>
            <person name="Sanders M."/>
            <person name="Sharp S."/>
            <person name="Simmonds M."/>
            <person name="Stevens K."/>
            <person name="Whitehead S."/>
            <person name="Barrell B.G."/>
            <person name="Spratt B.G."/>
            <person name="Parkhill J."/>
        </authorList>
    </citation>
    <scope>NUCLEOTIDE SEQUENCE [LARGE SCALE GENOMIC DNA]</scope>
    <source>
        <strain>MSSA476</strain>
    </source>
</reference>
<gene>
    <name type="ordered locus">SAS2572</name>
</gene>
<organism>
    <name type="scientific">Staphylococcus aureus (strain MSSA476)</name>
    <dbReference type="NCBI Taxonomy" id="282459"/>
    <lineage>
        <taxon>Bacteria</taxon>
        <taxon>Bacillati</taxon>
        <taxon>Bacillota</taxon>
        <taxon>Bacilli</taxon>
        <taxon>Bacillales</taxon>
        <taxon>Staphylococcaceae</taxon>
        <taxon>Staphylococcus</taxon>
    </lineage>
</organism>
<protein>
    <recommendedName>
        <fullName>UPF0312 protein SAS2572</fullName>
    </recommendedName>
</protein>